<organism>
    <name type="scientific">Arthrobacter sp. (strain FB24)</name>
    <dbReference type="NCBI Taxonomy" id="290399"/>
    <lineage>
        <taxon>Bacteria</taxon>
        <taxon>Bacillati</taxon>
        <taxon>Actinomycetota</taxon>
        <taxon>Actinomycetes</taxon>
        <taxon>Micrococcales</taxon>
        <taxon>Micrococcaceae</taxon>
        <taxon>Arthrobacter</taxon>
    </lineage>
</organism>
<name>CARB_ARTS2</name>
<accession>A0JX72</accession>
<feature type="chain" id="PRO_1000066335" description="Carbamoyl phosphate synthase large chain">
    <location>
        <begin position="1"/>
        <end position="1099"/>
    </location>
</feature>
<feature type="domain" description="ATP-grasp 1" evidence="1">
    <location>
        <begin position="133"/>
        <end position="328"/>
    </location>
</feature>
<feature type="domain" description="ATP-grasp 2" evidence="1">
    <location>
        <begin position="677"/>
        <end position="868"/>
    </location>
</feature>
<feature type="domain" description="MGS-like" evidence="1">
    <location>
        <begin position="951"/>
        <end position="1099"/>
    </location>
</feature>
<feature type="region of interest" description="Carboxyphosphate synthetic domain" evidence="1">
    <location>
        <begin position="1"/>
        <end position="402"/>
    </location>
</feature>
<feature type="region of interest" description="Oligomerization domain" evidence="1">
    <location>
        <begin position="403"/>
        <end position="546"/>
    </location>
</feature>
<feature type="region of interest" description="Carbamoyl phosphate synthetic domain" evidence="1">
    <location>
        <begin position="547"/>
        <end position="950"/>
    </location>
</feature>
<feature type="region of interest" description="Allosteric domain" evidence="1">
    <location>
        <begin position="951"/>
        <end position="1099"/>
    </location>
</feature>
<feature type="binding site" evidence="1">
    <location>
        <position position="129"/>
    </location>
    <ligand>
        <name>ATP</name>
        <dbReference type="ChEBI" id="CHEBI:30616"/>
        <label>1</label>
    </ligand>
</feature>
<feature type="binding site" evidence="1">
    <location>
        <position position="169"/>
    </location>
    <ligand>
        <name>ATP</name>
        <dbReference type="ChEBI" id="CHEBI:30616"/>
        <label>1</label>
    </ligand>
</feature>
<feature type="binding site" evidence="1">
    <location>
        <position position="175"/>
    </location>
    <ligand>
        <name>ATP</name>
        <dbReference type="ChEBI" id="CHEBI:30616"/>
        <label>1</label>
    </ligand>
</feature>
<feature type="binding site" evidence="1">
    <location>
        <position position="176"/>
    </location>
    <ligand>
        <name>ATP</name>
        <dbReference type="ChEBI" id="CHEBI:30616"/>
        <label>1</label>
    </ligand>
</feature>
<feature type="binding site" evidence="1">
    <location>
        <position position="208"/>
    </location>
    <ligand>
        <name>ATP</name>
        <dbReference type="ChEBI" id="CHEBI:30616"/>
        <label>1</label>
    </ligand>
</feature>
<feature type="binding site" evidence="1">
    <location>
        <position position="210"/>
    </location>
    <ligand>
        <name>ATP</name>
        <dbReference type="ChEBI" id="CHEBI:30616"/>
        <label>1</label>
    </ligand>
</feature>
<feature type="binding site" evidence="1">
    <location>
        <position position="215"/>
    </location>
    <ligand>
        <name>ATP</name>
        <dbReference type="ChEBI" id="CHEBI:30616"/>
        <label>1</label>
    </ligand>
</feature>
<feature type="binding site" evidence="1">
    <location>
        <position position="241"/>
    </location>
    <ligand>
        <name>ATP</name>
        <dbReference type="ChEBI" id="CHEBI:30616"/>
        <label>1</label>
    </ligand>
</feature>
<feature type="binding site" evidence="1">
    <location>
        <position position="242"/>
    </location>
    <ligand>
        <name>ATP</name>
        <dbReference type="ChEBI" id="CHEBI:30616"/>
        <label>1</label>
    </ligand>
</feature>
<feature type="binding site" evidence="1">
    <location>
        <position position="243"/>
    </location>
    <ligand>
        <name>ATP</name>
        <dbReference type="ChEBI" id="CHEBI:30616"/>
        <label>1</label>
    </ligand>
</feature>
<feature type="binding site" evidence="1">
    <location>
        <position position="285"/>
    </location>
    <ligand>
        <name>ATP</name>
        <dbReference type="ChEBI" id="CHEBI:30616"/>
        <label>1</label>
    </ligand>
</feature>
<feature type="binding site" evidence="1">
    <location>
        <position position="285"/>
    </location>
    <ligand>
        <name>Mg(2+)</name>
        <dbReference type="ChEBI" id="CHEBI:18420"/>
        <label>1</label>
    </ligand>
</feature>
<feature type="binding site" evidence="1">
    <location>
        <position position="285"/>
    </location>
    <ligand>
        <name>Mn(2+)</name>
        <dbReference type="ChEBI" id="CHEBI:29035"/>
        <label>1</label>
    </ligand>
</feature>
<feature type="binding site" evidence="1">
    <location>
        <position position="299"/>
    </location>
    <ligand>
        <name>ATP</name>
        <dbReference type="ChEBI" id="CHEBI:30616"/>
        <label>1</label>
    </ligand>
</feature>
<feature type="binding site" evidence="1">
    <location>
        <position position="299"/>
    </location>
    <ligand>
        <name>Mg(2+)</name>
        <dbReference type="ChEBI" id="CHEBI:18420"/>
        <label>1</label>
    </ligand>
</feature>
<feature type="binding site" evidence="1">
    <location>
        <position position="299"/>
    </location>
    <ligand>
        <name>Mg(2+)</name>
        <dbReference type="ChEBI" id="CHEBI:18420"/>
        <label>2</label>
    </ligand>
</feature>
<feature type="binding site" evidence="1">
    <location>
        <position position="299"/>
    </location>
    <ligand>
        <name>Mn(2+)</name>
        <dbReference type="ChEBI" id="CHEBI:29035"/>
        <label>1</label>
    </ligand>
</feature>
<feature type="binding site" evidence="1">
    <location>
        <position position="299"/>
    </location>
    <ligand>
        <name>Mn(2+)</name>
        <dbReference type="ChEBI" id="CHEBI:29035"/>
        <label>2</label>
    </ligand>
</feature>
<feature type="binding site" evidence="1">
    <location>
        <position position="301"/>
    </location>
    <ligand>
        <name>Mg(2+)</name>
        <dbReference type="ChEBI" id="CHEBI:18420"/>
        <label>2</label>
    </ligand>
</feature>
<feature type="binding site" evidence="1">
    <location>
        <position position="301"/>
    </location>
    <ligand>
        <name>Mn(2+)</name>
        <dbReference type="ChEBI" id="CHEBI:29035"/>
        <label>2</label>
    </ligand>
</feature>
<feature type="binding site" evidence="1">
    <location>
        <position position="713"/>
    </location>
    <ligand>
        <name>ATP</name>
        <dbReference type="ChEBI" id="CHEBI:30616"/>
        <label>2</label>
    </ligand>
</feature>
<feature type="binding site" evidence="1">
    <location>
        <position position="752"/>
    </location>
    <ligand>
        <name>ATP</name>
        <dbReference type="ChEBI" id="CHEBI:30616"/>
        <label>2</label>
    </ligand>
</feature>
<feature type="binding site" evidence="1">
    <location>
        <position position="754"/>
    </location>
    <ligand>
        <name>ATP</name>
        <dbReference type="ChEBI" id="CHEBI:30616"/>
        <label>2</label>
    </ligand>
</feature>
<feature type="binding site" evidence="1">
    <location>
        <position position="759"/>
    </location>
    <ligand>
        <name>ATP</name>
        <dbReference type="ChEBI" id="CHEBI:30616"/>
        <label>2</label>
    </ligand>
</feature>
<feature type="binding site" evidence="1">
    <location>
        <position position="784"/>
    </location>
    <ligand>
        <name>ATP</name>
        <dbReference type="ChEBI" id="CHEBI:30616"/>
        <label>2</label>
    </ligand>
</feature>
<feature type="binding site" evidence="1">
    <location>
        <position position="785"/>
    </location>
    <ligand>
        <name>ATP</name>
        <dbReference type="ChEBI" id="CHEBI:30616"/>
        <label>2</label>
    </ligand>
</feature>
<feature type="binding site" evidence="1">
    <location>
        <position position="786"/>
    </location>
    <ligand>
        <name>ATP</name>
        <dbReference type="ChEBI" id="CHEBI:30616"/>
        <label>2</label>
    </ligand>
</feature>
<feature type="binding site" evidence="1">
    <location>
        <position position="787"/>
    </location>
    <ligand>
        <name>ATP</name>
        <dbReference type="ChEBI" id="CHEBI:30616"/>
        <label>2</label>
    </ligand>
</feature>
<feature type="binding site" evidence="1">
    <location>
        <position position="827"/>
    </location>
    <ligand>
        <name>ATP</name>
        <dbReference type="ChEBI" id="CHEBI:30616"/>
        <label>2</label>
    </ligand>
</feature>
<feature type="binding site" evidence="1">
    <location>
        <position position="827"/>
    </location>
    <ligand>
        <name>Mg(2+)</name>
        <dbReference type="ChEBI" id="CHEBI:18420"/>
        <label>3</label>
    </ligand>
</feature>
<feature type="binding site" evidence="1">
    <location>
        <position position="827"/>
    </location>
    <ligand>
        <name>Mn(2+)</name>
        <dbReference type="ChEBI" id="CHEBI:29035"/>
        <label>3</label>
    </ligand>
</feature>
<feature type="binding site" evidence="1">
    <location>
        <position position="839"/>
    </location>
    <ligand>
        <name>ATP</name>
        <dbReference type="ChEBI" id="CHEBI:30616"/>
        <label>2</label>
    </ligand>
</feature>
<feature type="binding site" evidence="1">
    <location>
        <position position="839"/>
    </location>
    <ligand>
        <name>Mg(2+)</name>
        <dbReference type="ChEBI" id="CHEBI:18420"/>
        <label>3</label>
    </ligand>
</feature>
<feature type="binding site" evidence="1">
    <location>
        <position position="839"/>
    </location>
    <ligand>
        <name>Mg(2+)</name>
        <dbReference type="ChEBI" id="CHEBI:18420"/>
        <label>4</label>
    </ligand>
</feature>
<feature type="binding site" evidence="1">
    <location>
        <position position="839"/>
    </location>
    <ligand>
        <name>Mn(2+)</name>
        <dbReference type="ChEBI" id="CHEBI:29035"/>
        <label>3</label>
    </ligand>
</feature>
<feature type="binding site" evidence="1">
    <location>
        <position position="839"/>
    </location>
    <ligand>
        <name>Mn(2+)</name>
        <dbReference type="ChEBI" id="CHEBI:29035"/>
        <label>4</label>
    </ligand>
</feature>
<feature type="binding site" evidence="1">
    <location>
        <position position="841"/>
    </location>
    <ligand>
        <name>Mg(2+)</name>
        <dbReference type="ChEBI" id="CHEBI:18420"/>
        <label>4</label>
    </ligand>
</feature>
<feature type="binding site" evidence="1">
    <location>
        <position position="841"/>
    </location>
    <ligand>
        <name>Mn(2+)</name>
        <dbReference type="ChEBI" id="CHEBI:29035"/>
        <label>4</label>
    </ligand>
</feature>
<proteinExistence type="inferred from homology"/>
<evidence type="ECO:0000255" key="1">
    <source>
        <dbReference type="HAMAP-Rule" id="MF_01210"/>
    </source>
</evidence>
<comment type="function">
    <text evidence="1">Large subunit of the glutamine-dependent carbamoyl phosphate synthetase (CPSase). CPSase catalyzes the formation of carbamoyl phosphate from the ammonia moiety of glutamine, carbonate, and phosphate donated by ATP, constituting the first step of 2 biosynthetic pathways, one leading to arginine and/or urea and the other to pyrimidine nucleotides. The large subunit (synthetase) binds the substrates ammonia (free or transferred from glutamine from the small subunit), hydrogencarbonate and ATP and carries out an ATP-coupled ligase reaction, activating hydrogencarbonate by forming carboxy phosphate which reacts with ammonia to form carbamoyl phosphate.</text>
</comment>
<comment type="catalytic activity">
    <reaction evidence="1">
        <text>hydrogencarbonate + L-glutamine + 2 ATP + H2O = carbamoyl phosphate + L-glutamate + 2 ADP + phosphate + 2 H(+)</text>
        <dbReference type="Rhea" id="RHEA:18633"/>
        <dbReference type="ChEBI" id="CHEBI:15377"/>
        <dbReference type="ChEBI" id="CHEBI:15378"/>
        <dbReference type="ChEBI" id="CHEBI:17544"/>
        <dbReference type="ChEBI" id="CHEBI:29985"/>
        <dbReference type="ChEBI" id="CHEBI:30616"/>
        <dbReference type="ChEBI" id="CHEBI:43474"/>
        <dbReference type="ChEBI" id="CHEBI:58228"/>
        <dbReference type="ChEBI" id="CHEBI:58359"/>
        <dbReference type="ChEBI" id="CHEBI:456216"/>
        <dbReference type="EC" id="6.3.5.5"/>
    </reaction>
</comment>
<comment type="catalytic activity">
    <molecule>Carbamoyl phosphate synthase large chain</molecule>
    <reaction evidence="1">
        <text>hydrogencarbonate + NH4(+) + 2 ATP = carbamoyl phosphate + 2 ADP + phosphate + 2 H(+)</text>
        <dbReference type="Rhea" id="RHEA:18029"/>
        <dbReference type="ChEBI" id="CHEBI:15378"/>
        <dbReference type="ChEBI" id="CHEBI:17544"/>
        <dbReference type="ChEBI" id="CHEBI:28938"/>
        <dbReference type="ChEBI" id="CHEBI:30616"/>
        <dbReference type="ChEBI" id="CHEBI:43474"/>
        <dbReference type="ChEBI" id="CHEBI:58228"/>
        <dbReference type="ChEBI" id="CHEBI:456216"/>
        <dbReference type="EC" id="6.3.4.16"/>
    </reaction>
</comment>
<comment type="cofactor">
    <cofactor evidence="1">
        <name>Mg(2+)</name>
        <dbReference type="ChEBI" id="CHEBI:18420"/>
    </cofactor>
    <cofactor evidence="1">
        <name>Mn(2+)</name>
        <dbReference type="ChEBI" id="CHEBI:29035"/>
    </cofactor>
    <text evidence="1">Binds 4 Mg(2+) or Mn(2+) ions per subunit.</text>
</comment>
<comment type="pathway">
    <text evidence="1">Amino-acid biosynthesis; L-arginine biosynthesis; carbamoyl phosphate from bicarbonate: step 1/1.</text>
</comment>
<comment type="pathway">
    <text evidence="1">Pyrimidine metabolism; UMP biosynthesis via de novo pathway; (S)-dihydroorotate from bicarbonate: step 1/3.</text>
</comment>
<comment type="subunit">
    <text evidence="1">Composed of two chains; the small (or glutamine) chain promotes the hydrolysis of glutamine to ammonia, which is used by the large (or ammonia) chain to synthesize carbamoyl phosphate. Tetramer of heterodimers (alpha,beta)4.</text>
</comment>
<comment type="domain">
    <text evidence="1">The large subunit is composed of 2 ATP-grasp domains that are involved in binding the 2 ATP molecules needed for carbamoyl phosphate synthesis. The N-terminal ATP-grasp domain (referred to as the carboxyphosphate synthetic component) catalyzes the ATP-dependent phosphorylation of hydrogencarbonate to carboxyphosphate and the subsequent nucleophilic attack by ammonia to form a carbamate intermediate. The C-terminal ATP-grasp domain (referred to as the carbamoyl phosphate synthetic component) then catalyzes the phosphorylation of carbamate with the second ATP to form the end product carbamoyl phosphate. The reactive and unstable enzyme intermediates are sequentially channeled from one active site to the next through the interior of the protein over a distance of at least 96 A.</text>
</comment>
<comment type="similarity">
    <text evidence="1">Belongs to the CarB family.</text>
</comment>
<protein>
    <recommendedName>
        <fullName evidence="1">Carbamoyl phosphate synthase large chain</fullName>
        <ecNumber evidence="1">6.3.4.16</ecNumber>
        <ecNumber evidence="1">6.3.5.5</ecNumber>
    </recommendedName>
    <alternativeName>
        <fullName evidence="1">Carbamoyl phosphate synthetase ammonia chain</fullName>
    </alternativeName>
</protein>
<dbReference type="EC" id="6.3.4.16" evidence="1"/>
<dbReference type="EC" id="6.3.5.5" evidence="1"/>
<dbReference type="EMBL" id="CP000454">
    <property type="protein sequence ID" value="ABK03642.1"/>
    <property type="molecule type" value="Genomic_DNA"/>
</dbReference>
<dbReference type="RefSeq" id="WP_011692106.1">
    <property type="nucleotide sequence ID" value="NC_008541.1"/>
</dbReference>
<dbReference type="SMR" id="A0JX72"/>
<dbReference type="STRING" id="290399.Arth_2262"/>
<dbReference type="KEGG" id="art:Arth_2262"/>
<dbReference type="eggNOG" id="COG0458">
    <property type="taxonomic scope" value="Bacteria"/>
</dbReference>
<dbReference type="HOGENOM" id="CLU_000513_1_0_11"/>
<dbReference type="OrthoDB" id="9804197at2"/>
<dbReference type="UniPathway" id="UPA00068">
    <property type="reaction ID" value="UER00171"/>
</dbReference>
<dbReference type="UniPathway" id="UPA00070">
    <property type="reaction ID" value="UER00115"/>
</dbReference>
<dbReference type="Proteomes" id="UP000000754">
    <property type="component" value="Chromosome"/>
</dbReference>
<dbReference type="GO" id="GO:0005737">
    <property type="term" value="C:cytoplasm"/>
    <property type="evidence" value="ECO:0007669"/>
    <property type="project" value="TreeGrafter"/>
</dbReference>
<dbReference type="GO" id="GO:0005524">
    <property type="term" value="F:ATP binding"/>
    <property type="evidence" value="ECO:0007669"/>
    <property type="project" value="UniProtKB-UniRule"/>
</dbReference>
<dbReference type="GO" id="GO:0004087">
    <property type="term" value="F:carbamoyl-phosphate synthase (ammonia) activity"/>
    <property type="evidence" value="ECO:0007669"/>
    <property type="project" value="RHEA"/>
</dbReference>
<dbReference type="GO" id="GO:0004088">
    <property type="term" value="F:carbamoyl-phosphate synthase (glutamine-hydrolyzing) activity"/>
    <property type="evidence" value="ECO:0007669"/>
    <property type="project" value="UniProtKB-UniRule"/>
</dbReference>
<dbReference type="GO" id="GO:0046872">
    <property type="term" value="F:metal ion binding"/>
    <property type="evidence" value="ECO:0007669"/>
    <property type="project" value="UniProtKB-KW"/>
</dbReference>
<dbReference type="GO" id="GO:0044205">
    <property type="term" value="P:'de novo' UMP biosynthetic process"/>
    <property type="evidence" value="ECO:0007669"/>
    <property type="project" value="UniProtKB-UniRule"/>
</dbReference>
<dbReference type="GO" id="GO:0006541">
    <property type="term" value="P:glutamine metabolic process"/>
    <property type="evidence" value="ECO:0007669"/>
    <property type="project" value="TreeGrafter"/>
</dbReference>
<dbReference type="GO" id="GO:0006526">
    <property type="term" value="P:L-arginine biosynthetic process"/>
    <property type="evidence" value="ECO:0007669"/>
    <property type="project" value="UniProtKB-UniRule"/>
</dbReference>
<dbReference type="CDD" id="cd01424">
    <property type="entry name" value="MGS_CPS_II"/>
    <property type="match status" value="1"/>
</dbReference>
<dbReference type="FunFam" id="1.10.1030.10:FF:000002">
    <property type="entry name" value="Carbamoyl-phosphate synthase large chain"/>
    <property type="match status" value="1"/>
</dbReference>
<dbReference type="FunFam" id="3.30.1490.20:FF:000001">
    <property type="entry name" value="Carbamoyl-phosphate synthase large chain"/>
    <property type="match status" value="1"/>
</dbReference>
<dbReference type="FunFam" id="3.30.470.20:FF:000007">
    <property type="entry name" value="Carbamoyl-phosphate synthase large chain"/>
    <property type="match status" value="1"/>
</dbReference>
<dbReference type="FunFam" id="3.30.470.20:FF:000014">
    <property type="entry name" value="Carbamoyl-phosphate synthase large chain"/>
    <property type="match status" value="1"/>
</dbReference>
<dbReference type="FunFam" id="3.40.50.20:FF:000001">
    <property type="entry name" value="Carbamoyl-phosphate synthase large chain"/>
    <property type="match status" value="2"/>
</dbReference>
<dbReference type="Gene3D" id="3.40.50.20">
    <property type="match status" value="2"/>
</dbReference>
<dbReference type="Gene3D" id="3.30.1490.20">
    <property type="entry name" value="ATP-grasp fold, A domain"/>
    <property type="match status" value="1"/>
</dbReference>
<dbReference type="Gene3D" id="3.30.470.20">
    <property type="entry name" value="ATP-grasp fold, B domain"/>
    <property type="match status" value="2"/>
</dbReference>
<dbReference type="Gene3D" id="1.10.1030.10">
    <property type="entry name" value="Carbamoyl-phosphate synthetase, large subunit oligomerisation domain"/>
    <property type="match status" value="1"/>
</dbReference>
<dbReference type="Gene3D" id="3.40.50.1380">
    <property type="entry name" value="Methylglyoxal synthase-like domain"/>
    <property type="match status" value="1"/>
</dbReference>
<dbReference type="HAMAP" id="MF_01210_B">
    <property type="entry name" value="CPSase_L_chain_B"/>
    <property type="match status" value="1"/>
</dbReference>
<dbReference type="InterPro" id="IPR011761">
    <property type="entry name" value="ATP-grasp"/>
</dbReference>
<dbReference type="InterPro" id="IPR013815">
    <property type="entry name" value="ATP_grasp_subdomain_1"/>
</dbReference>
<dbReference type="InterPro" id="IPR006275">
    <property type="entry name" value="CarbamoylP_synth_lsu"/>
</dbReference>
<dbReference type="InterPro" id="IPR005480">
    <property type="entry name" value="CarbamoylP_synth_lsu_oligo"/>
</dbReference>
<dbReference type="InterPro" id="IPR036897">
    <property type="entry name" value="CarbamoylP_synth_lsu_oligo_sf"/>
</dbReference>
<dbReference type="InterPro" id="IPR005479">
    <property type="entry name" value="CbamoylP_synth_lsu-like_ATP-bd"/>
</dbReference>
<dbReference type="InterPro" id="IPR005483">
    <property type="entry name" value="CbamoylP_synth_lsu_CPSase_dom"/>
</dbReference>
<dbReference type="InterPro" id="IPR011607">
    <property type="entry name" value="MGS-like_dom"/>
</dbReference>
<dbReference type="InterPro" id="IPR036914">
    <property type="entry name" value="MGS-like_dom_sf"/>
</dbReference>
<dbReference type="InterPro" id="IPR033937">
    <property type="entry name" value="MGS_CPS_CarB"/>
</dbReference>
<dbReference type="InterPro" id="IPR016185">
    <property type="entry name" value="PreATP-grasp_dom_sf"/>
</dbReference>
<dbReference type="NCBIfam" id="TIGR01369">
    <property type="entry name" value="CPSaseII_lrg"/>
    <property type="match status" value="1"/>
</dbReference>
<dbReference type="NCBIfam" id="NF003671">
    <property type="entry name" value="PRK05294.1"/>
    <property type="match status" value="1"/>
</dbReference>
<dbReference type="NCBIfam" id="NF009455">
    <property type="entry name" value="PRK12815.1"/>
    <property type="match status" value="1"/>
</dbReference>
<dbReference type="PANTHER" id="PTHR11405:SF53">
    <property type="entry name" value="CARBAMOYL-PHOSPHATE SYNTHASE [AMMONIA], MITOCHONDRIAL"/>
    <property type="match status" value="1"/>
</dbReference>
<dbReference type="PANTHER" id="PTHR11405">
    <property type="entry name" value="CARBAMOYLTRANSFERASE FAMILY MEMBER"/>
    <property type="match status" value="1"/>
</dbReference>
<dbReference type="Pfam" id="PF02786">
    <property type="entry name" value="CPSase_L_D2"/>
    <property type="match status" value="2"/>
</dbReference>
<dbReference type="Pfam" id="PF02787">
    <property type="entry name" value="CPSase_L_D3"/>
    <property type="match status" value="1"/>
</dbReference>
<dbReference type="Pfam" id="PF02142">
    <property type="entry name" value="MGS"/>
    <property type="match status" value="1"/>
</dbReference>
<dbReference type="PRINTS" id="PR00098">
    <property type="entry name" value="CPSASE"/>
</dbReference>
<dbReference type="SMART" id="SM01096">
    <property type="entry name" value="CPSase_L_D3"/>
    <property type="match status" value="1"/>
</dbReference>
<dbReference type="SMART" id="SM00851">
    <property type="entry name" value="MGS"/>
    <property type="match status" value="1"/>
</dbReference>
<dbReference type="SUPFAM" id="SSF48108">
    <property type="entry name" value="Carbamoyl phosphate synthetase, large subunit connection domain"/>
    <property type="match status" value="1"/>
</dbReference>
<dbReference type="SUPFAM" id="SSF56059">
    <property type="entry name" value="Glutathione synthetase ATP-binding domain-like"/>
    <property type="match status" value="2"/>
</dbReference>
<dbReference type="SUPFAM" id="SSF52335">
    <property type="entry name" value="Methylglyoxal synthase-like"/>
    <property type="match status" value="1"/>
</dbReference>
<dbReference type="SUPFAM" id="SSF52440">
    <property type="entry name" value="PreATP-grasp domain"/>
    <property type="match status" value="2"/>
</dbReference>
<dbReference type="PROSITE" id="PS50975">
    <property type="entry name" value="ATP_GRASP"/>
    <property type="match status" value="2"/>
</dbReference>
<dbReference type="PROSITE" id="PS00866">
    <property type="entry name" value="CPSASE_1"/>
    <property type="match status" value="2"/>
</dbReference>
<dbReference type="PROSITE" id="PS00867">
    <property type="entry name" value="CPSASE_2"/>
    <property type="match status" value="2"/>
</dbReference>
<dbReference type="PROSITE" id="PS51855">
    <property type="entry name" value="MGS"/>
    <property type="match status" value="1"/>
</dbReference>
<gene>
    <name evidence="1" type="primary">carB</name>
    <name type="ordered locus">Arth_2262</name>
</gene>
<sequence length="1099" mass="118840">MPKRTDLKSVLVIGSGPIVIGQAAEFDYSGTQALRVLKEEGLRVILVNSNPATIMTDPEFADATYVEPITPEVVEKIIAKERPDAILPTLGGQTALNTAIALDKNGVLEKYNVELIGANIAAIELGEDREKFKGVVERCGAESARSHIIHSMDEALKAAEDLGYPMVVRPSFTMGGLGSGLAYTEDDLRRIVGQGLQYSPTSEVLLEESILGWKEYELEMMRDKNDNVVVVCSIENFDPVGVHTGDSITVAPALTLTDREYQRLRDISIAVIREVGVDTGGCNIQFAVEPDTGRVVVIEMNPRVSRSSALASKATGFAIAKIATKLSLGYTLDEIPNDITQKTPASFEPTLDYVVVKVPRFAFEKFPAADPTLTTTMKSVGEAMAMGRNFTEALQKALRSLEQKGSQLDFSHVPEWEVPELIEKAKRPTTERLHQVQRALLGGATVEQLFEATKIDPWYLDQLQLLNEISHEIRKSTALTPEMLQRAKRHGFSDEQIGALTNNQEAVVRGVRQALGIRPVYKTVDTCAAEFAAYTPYHYSSYDEEDEVALHSKPSIIILGSGPNRIGQGIEFDYSCVHASMALRKAGYETVMVNCNPETVSTDYDVSTRLYFEPLTLEDVLEVIAAEERTGGVMGVFVQLGGQTPLKLAQQLADAGVPILGTSPEAIDLAEHRGAFSRVLDEAGLISPKNGTAVSFEDAKKIADEIGYPVLVRPSYVLGGRGMEIVYDEPNLSRYIANATEITTEHPVLIDRFLEDAVEIDVDALYDGTEMYLGGIMEHIEEAGIHSGDSACVLPPITLGNNVIERVRTATLAIAEGVGVRGLINIQFALASDVLYVLEANPRASRTVPFVSKATGVQMAKAAALIGTGVTINQLRSAYKMLPETGDGSTLPFDAPVSVKEAVLPFSRFRTPEGKVVDSLLGPEMRSTGEVMGIDKHFDTAFAKSQAAANNALPTEGKIFVSVANRDKRSVIMGVKRLSDLGFEIVSTGGTADVLRRNGIQATPVRKVAEGSSAEGEGTIADLIVAGEIDMVFNTPSGGEARIDGYELRAAATSIGIPCITTVAEFNAAVQAIEAQRTYEWSVTSLQEHAENLKALQNG</sequence>
<reference key="1">
    <citation type="journal article" date="2013" name="Stand. Genomic Sci.">
        <title>Complete genome sequence of Arthrobacter sp. strain FB24.</title>
        <authorList>
            <person name="Nakatsu C.H."/>
            <person name="Barabote R."/>
            <person name="Thompson S."/>
            <person name="Bruce D."/>
            <person name="Detter C."/>
            <person name="Brettin T."/>
            <person name="Han C."/>
            <person name="Beasley F."/>
            <person name="Chen W."/>
            <person name="Konopka A."/>
            <person name="Xie G."/>
        </authorList>
    </citation>
    <scope>NUCLEOTIDE SEQUENCE [LARGE SCALE GENOMIC DNA]</scope>
    <source>
        <strain>FB24</strain>
    </source>
</reference>
<keyword id="KW-0028">Amino-acid biosynthesis</keyword>
<keyword id="KW-0055">Arginine biosynthesis</keyword>
<keyword id="KW-0067">ATP-binding</keyword>
<keyword id="KW-0436">Ligase</keyword>
<keyword id="KW-0460">Magnesium</keyword>
<keyword id="KW-0464">Manganese</keyword>
<keyword id="KW-0479">Metal-binding</keyword>
<keyword id="KW-0547">Nucleotide-binding</keyword>
<keyword id="KW-0665">Pyrimidine biosynthesis</keyword>
<keyword id="KW-1185">Reference proteome</keyword>
<keyword id="KW-0677">Repeat</keyword>